<protein>
    <recommendedName>
        <fullName evidence="6">U-myrmeciitoxin(01)-Mg7a</fullName>
        <shortName evidence="5">MIITX(01)-Mg7a</shortName>
        <shortName evidence="6">U-MIITX(01)-Mg7a</shortName>
    </recommendedName>
</protein>
<dbReference type="GO" id="GO:0005576">
    <property type="term" value="C:extracellular region"/>
    <property type="evidence" value="ECO:0007669"/>
    <property type="project" value="UniProtKB-SubCell"/>
</dbReference>
<dbReference type="InterPro" id="IPR049518">
    <property type="entry name" value="Pilosulin"/>
</dbReference>
<dbReference type="Pfam" id="PF17499">
    <property type="entry name" value="Pilosulin"/>
    <property type="match status" value="1"/>
</dbReference>
<evidence type="ECO:0000255" key="1"/>
<evidence type="ECO:0000256" key="2">
    <source>
        <dbReference type="SAM" id="MobiDB-lite"/>
    </source>
</evidence>
<evidence type="ECO:0000269" key="3">
    <source>
    </source>
</evidence>
<evidence type="ECO:0000269" key="4">
    <source>
    </source>
</evidence>
<evidence type="ECO:0000303" key="5">
    <source>
    </source>
</evidence>
<evidence type="ECO:0000305" key="6"/>
<evidence type="ECO:0000305" key="7">
    <source>
    </source>
</evidence>
<evidence type="ECO:0000305" key="8">
    <source>
    </source>
</evidence>
<comment type="function">
    <text evidence="4 8">Neurotoxin that triggers pain behavior and inflammation in mammals, and is paralytic and lethal to insects (PubMed:34693225). Causes a time-dependent increase in cell leak current (PubMed:34693225). May act by targeting membranes (Probable).</text>
</comment>
<comment type="subcellular location">
    <subcellularLocation>
        <location evidence="3 4">Secreted</location>
    </subcellularLocation>
    <subcellularLocation>
        <location evidence="8">Target cell membrane</location>
    </subcellularLocation>
    <text evidence="4">Adopts helical secondary structure in membrane-mimicking environment.</text>
</comment>
<comment type="tissue specificity">
    <text evidence="7">Expressed by the venom gland.</text>
</comment>
<comment type="PTM">
    <text evidence="4">Glycosylation is critical to maintaining the aqueous solubility of this protein, but does not directly contribute to its activity.</text>
</comment>
<comment type="mass spectrometry" mass="7110.84" method="MALDI" evidence="3"/>
<comment type="toxic dose">
    <text evidence="4">ED(50) is 1.2 nmol/g by intrathoracic injection into insects (D.melanogaster). The effect dose (ED) is used here as a measure of paralysis and lethality for insects.</text>
</comment>
<comment type="miscellaneous">
    <text evidence="4">Very highly expressed in the venom apparatus (5%).</text>
</comment>
<comment type="similarity">
    <text evidence="6">Belongs to the formicidae venom precursor-01 superfamily.</text>
</comment>
<comment type="online information" name="National Center for Biotechnology Information (NCBI)">
    <link uri="https://www.ncbi.nlm.nih.gov/nuccore/GGFG01000009"/>
</comment>
<sequence length="135" mass="13733">MKLSCLSLALAIILLLAIVHSPNMEVKALAGPEADAIGFADAFGEADAFGEADAFGEADAFGEADAFGEADAKRSKSSSKTKPKKPKKPKKKIKIPDWVKSGGKMVGEAVAGAVADAAVSAVMDAAVGTTAEPEQ</sequence>
<keyword id="KW-0903">Direct protein sequencing</keyword>
<keyword id="KW-0325">Glycoprotein</keyword>
<keyword id="KW-0472">Membrane</keyword>
<keyword id="KW-0528">Neurotoxin</keyword>
<keyword id="KW-0964">Secreted</keyword>
<keyword id="KW-0732">Signal</keyword>
<keyword id="KW-1052">Target cell membrane</keyword>
<keyword id="KW-1053">Target membrane</keyword>
<keyword id="KW-0800">Toxin</keyword>
<name>TX17A_MYRGU</name>
<reference key="1">
    <citation type="journal article" date="2018" name="Sci. Adv.">
        <title>A comprehensive portrait of the venom of the giant red bull ant, Myrmecia gulosa, reveals a hyperdiverse hymenopteran toxin gene family.</title>
        <authorList>
            <person name="Robinson S.D."/>
            <person name="Mueller A."/>
            <person name="Clayton D."/>
            <person name="Starobova H."/>
            <person name="Hamilton B.R."/>
            <person name="Payne R.J."/>
            <person name="Vetter I."/>
            <person name="King G.F."/>
            <person name="Undheim E.A.B."/>
        </authorList>
    </citation>
    <scope>NUCLEOTIDE SEQUENCE [MRNA]</scope>
    <scope>MASS SPECTROMETRY</scope>
    <scope>SUBCELLULAR LOCATION</scope>
    <scope>GLYCOSYLATION</scope>
    <source>
        <tissue>Venom</tissue>
        <tissue>Venom gland</tissue>
    </source>
</reference>
<reference key="2">
    <citation type="journal article" date="2021" name="IScience">
        <title>A pain-causing and paralytic ant venom glycopeptide.</title>
        <authorList>
            <person name="Robinson S.D."/>
            <person name="Kambanis L."/>
            <person name="Clayton D."/>
            <person name="Hinneburg H."/>
            <person name="Corcilius L."/>
            <person name="Mueller A."/>
            <person name="Walker A.A."/>
            <person name="Keramidas A."/>
            <person name="Kulkarni S.S."/>
            <person name="Jones A."/>
            <person name="Vetter I."/>
            <person name="Thaysen-Andersen M."/>
            <person name="Payne R.J."/>
            <person name="King G.F."/>
            <person name="Undheim E.A.B."/>
        </authorList>
    </citation>
    <scope>PROTEIN SEQUENCE OF 73-135</scope>
    <scope>FUNCTION</scope>
    <scope>BIOASSAY</scope>
    <scope>SYNTHESIS</scope>
    <scope>MASS SPECTROMETRY</scope>
    <scope>SUBCELLULAR LOCATION</scope>
    <scope>GLYCOSYLATION AT SER-120; THR-129 AND THR-130</scope>
    <scope>TOXIC DOSE</scope>
    <source>
        <tissue>Venom</tissue>
    </source>
</reference>
<feature type="signal peptide" evidence="1">
    <location>
        <begin position="1"/>
        <end position="21"/>
    </location>
</feature>
<feature type="propeptide" id="PRO_0000447089" evidence="7">
    <location>
        <begin position="22"/>
        <end position="72"/>
    </location>
</feature>
<feature type="chain" id="PRO_0000447090" description="U-myrmeciitoxin(01)-Mg7a" evidence="3">
    <location>
        <begin position="73"/>
        <end position="135"/>
    </location>
</feature>
<feature type="region of interest" description="Disordered" evidence="2">
    <location>
        <begin position="69"/>
        <end position="95"/>
    </location>
</feature>
<feature type="compositionally biased region" description="Basic residues" evidence="2">
    <location>
        <begin position="75"/>
        <end position="93"/>
    </location>
</feature>
<feature type="glycosylation site" description="O-linked (GalNAc...) serine" evidence="4">
    <location>
        <position position="120"/>
    </location>
</feature>
<feature type="glycosylation site" description="O-linked (GalNAc...) threonine" evidence="4">
    <location>
        <position position="129"/>
    </location>
</feature>
<feature type="glycosylation site" description="O-linked (GalNAc...) threonine" evidence="4">
    <location>
        <position position="130"/>
    </location>
</feature>
<accession>P0DSK3</accession>
<organism>
    <name type="scientific">Myrmecia gulosa</name>
    <name type="common">Red bulldog ant</name>
    <dbReference type="NCBI Taxonomy" id="36170"/>
    <lineage>
        <taxon>Eukaryota</taxon>
        <taxon>Metazoa</taxon>
        <taxon>Ecdysozoa</taxon>
        <taxon>Arthropoda</taxon>
        <taxon>Hexapoda</taxon>
        <taxon>Insecta</taxon>
        <taxon>Pterygota</taxon>
        <taxon>Neoptera</taxon>
        <taxon>Endopterygota</taxon>
        <taxon>Hymenoptera</taxon>
        <taxon>Apocrita</taxon>
        <taxon>Aculeata</taxon>
        <taxon>Formicoidea</taxon>
        <taxon>Formicidae</taxon>
        <taxon>Myrmeciinae</taxon>
        <taxon>Myrmeciini</taxon>
        <taxon>Myrmecia</taxon>
    </lineage>
</organism>
<proteinExistence type="evidence at protein level"/>